<feature type="chain" id="PRO_0000132095" description="Small ribosomal subunit protein uS13">
    <location>
        <begin position="1"/>
        <end position="122"/>
    </location>
</feature>
<feature type="region of interest" description="Disordered" evidence="2">
    <location>
        <begin position="94"/>
        <end position="122"/>
    </location>
</feature>
<accession>P44380</accession>
<name>RS13_HAEIN</name>
<protein>
    <recommendedName>
        <fullName evidence="1">Small ribosomal subunit protein uS13</fullName>
    </recommendedName>
    <alternativeName>
        <fullName evidence="3">30S ribosomal protein S13</fullName>
    </alternativeName>
</protein>
<keyword id="KW-1185">Reference proteome</keyword>
<keyword id="KW-0687">Ribonucleoprotein</keyword>
<keyword id="KW-0689">Ribosomal protein</keyword>
<keyword id="KW-0694">RNA-binding</keyword>
<keyword id="KW-0699">rRNA-binding</keyword>
<keyword id="KW-0820">tRNA-binding</keyword>
<proteinExistence type="inferred from homology"/>
<sequence length="122" mass="13696">MARIAGINIPDHKHAVIALTAIYGIGKTRSQAICAAAGIAEDVKIRELSEEQIDKLRDEVGKFTVEGDLRREVTLNIKRLLDLGCYRGLRHRRSLPVRGQRTKTNARTRKVHVSRSKNSRGK</sequence>
<evidence type="ECO:0000255" key="1">
    <source>
        <dbReference type="HAMAP-Rule" id="MF_01315"/>
    </source>
</evidence>
<evidence type="ECO:0000256" key="2">
    <source>
        <dbReference type="SAM" id="MobiDB-lite"/>
    </source>
</evidence>
<evidence type="ECO:0000305" key="3"/>
<reference key="1">
    <citation type="journal article" date="1995" name="Science">
        <title>Whole-genome random sequencing and assembly of Haemophilus influenzae Rd.</title>
        <authorList>
            <person name="Fleischmann R.D."/>
            <person name="Adams M.D."/>
            <person name="White O."/>
            <person name="Clayton R.A."/>
            <person name="Kirkness E.F."/>
            <person name="Kerlavage A.R."/>
            <person name="Bult C.J."/>
            <person name="Tomb J.-F."/>
            <person name="Dougherty B.A."/>
            <person name="Merrick J.M."/>
            <person name="McKenney K."/>
            <person name="Sutton G.G."/>
            <person name="FitzHugh W."/>
            <person name="Fields C.A."/>
            <person name="Gocayne J.D."/>
            <person name="Scott J.D."/>
            <person name="Shirley R."/>
            <person name="Liu L.-I."/>
            <person name="Glodek A."/>
            <person name="Kelley J.M."/>
            <person name="Weidman J.F."/>
            <person name="Phillips C.A."/>
            <person name="Spriggs T."/>
            <person name="Hedblom E."/>
            <person name="Cotton M.D."/>
            <person name="Utterback T.R."/>
            <person name="Hanna M.C."/>
            <person name="Nguyen D.T."/>
            <person name="Saudek D.M."/>
            <person name="Brandon R.C."/>
            <person name="Fine L.D."/>
            <person name="Fritchman J.L."/>
            <person name="Fuhrmann J.L."/>
            <person name="Geoghagen N.S.M."/>
            <person name="Gnehm C.L."/>
            <person name="McDonald L.A."/>
            <person name="Small K.V."/>
            <person name="Fraser C.M."/>
            <person name="Smith H.O."/>
            <person name="Venter J.C."/>
        </authorList>
    </citation>
    <scope>NUCLEOTIDE SEQUENCE [LARGE SCALE GENOMIC DNA]</scope>
    <source>
        <strain>ATCC 51907 / DSM 11121 / KW20 / Rd</strain>
    </source>
</reference>
<comment type="function">
    <text evidence="1">Located at the top of the head of the 30S subunit, it contacts several helices of the 16S rRNA. In the 70S ribosome it contacts the 23S rRNA (bridge B1a) and protein L5 of the 50S subunit (bridge B1b), connecting the 2 subunits; these bridges are implicated in subunit movement. Contacts the tRNAs in the A and P-sites.</text>
</comment>
<comment type="subunit">
    <text evidence="1">Part of the 30S ribosomal subunit. Forms a loose heterodimer with protein S19. Forms two bridges to the 50S subunit in the 70S ribosome.</text>
</comment>
<comment type="similarity">
    <text evidence="1">Belongs to the universal ribosomal protein uS13 family.</text>
</comment>
<gene>
    <name evidence="1" type="primary">rpsM</name>
    <name evidence="1" type="synonym">rps13</name>
    <name type="ordered locus">HI_0799</name>
</gene>
<organism>
    <name type="scientific">Haemophilus influenzae (strain ATCC 51907 / DSM 11121 / KW20 / Rd)</name>
    <dbReference type="NCBI Taxonomy" id="71421"/>
    <lineage>
        <taxon>Bacteria</taxon>
        <taxon>Pseudomonadati</taxon>
        <taxon>Pseudomonadota</taxon>
        <taxon>Gammaproteobacteria</taxon>
        <taxon>Pasteurellales</taxon>
        <taxon>Pasteurellaceae</taxon>
        <taxon>Haemophilus</taxon>
    </lineage>
</organism>
<dbReference type="EMBL" id="L42023">
    <property type="protein sequence ID" value="AAC22458.1"/>
    <property type="molecule type" value="Genomic_DNA"/>
</dbReference>
<dbReference type="PIR" id="H64094">
    <property type="entry name" value="H64094"/>
</dbReference>
<dbReference type="RefSeq" id="NP_438959.3">
    <property type="nucleotide sequence ID" value="NC_000907.1"/>
</dbReference>
<dbReference type="SMR" id="P44380"/>
<dbReference type="STRING" id="71421.HI_0799"/>
<dbReference type="EnsemblBacteria" id="AAC22458">
    <property type="protein sequence ID" value="AAC22458"/>
    <property type="gene ID" value="HI_0799"/>
</dbReference>
<dbReference type="KEGG" id="hin:HI_0799"/>
<dbReference type="PATRIC" id="fig|71421.8.peg.839"/>
<dbReference type="eggNOG" id="COG0099">
    <property type="taxonomic scope" value="Bacteria"/>
</dbReference>
<dbReference type="HOGENOM" id="CLU_103849_1_2_6"/>
<dbReference type="OrthoDB" id="9803610at2"/>
<dbReference type="PhylomeDB" id="P44380"/>
<dbReference type="BioCyc" id="HINF71421:G1GJ1-840-MONOMER"/>
<dbReference type="Proteomes" id="UP000000579">
    <property type="component" value="Chromosome"/>
</dbReference>
<dbReference type="GO" id="GO:0005829">
    <property type="term" value="C:cytosol"/>
    <property type="evidence" value="ECO:0000318"/>
    <property type="project" value="GO_Central"/>
</dbReference>
<dbReference type="GO" id="GO:0015935">
    <property type="term" value="C:small ribosomal subunit"/>
    <property type="evidence" value="ECO:0000318"/>
    <property type="project" value="GO_Central"/>
</dbReference>
<dbReference type="GO" id="GO:0019843">
    <property type="term" value="F:rRNA binding"/>
    <property type="evidence" value="ECO:0007669"/>
    <property type="project" value="UniProtKB-UniRule"/>
</dbReference>
<dbReference type="GO" id="GO:0003735">
    <property type="term" value="F:structural constituent of ribosome"/>
    <property type="evidence" value="ECO:0007669"/>
    <property type="project" value="InterPro"/>
</dbReference>
<dbReference type="GO" id="GO:0000049">
    <property type="term" value="F:tRNA binding"/>
    <property type="evidence" value="ECO:0007669"/>
    <property type="project" value="UniProtKB-UniRule"/>
</dbReference>
<dbReference type="GO" id="GO:0006412">
    <property type="term" value="P:translation"/>
    <property type="evidence" value="ECO:0007669"/>
    <property type="project" value="UniProtKB-UniRule"/>
</dbReference>
<dbReference type="FunFam" id="1.10.8.50:FF:000001">
    <property type="entry name" value="30S ribosomal protein S13"/>
    <property type="match status" value="1"/>
</dbReference>
<dbReference type="FunFam" id="4.10.910.10:FF:000001">
    <property type="entry name" value="30S ribosomal protein S13"/>
    <property type="match status" value="1"/>
</dbReference>
<dbReference type="Gene3D" id="1.10.8.50">
    <property type="match status" value="1"/>
</dbReference>
<dbReference type="Gene3D" id="4.10.910.10">
    <property type="entry name" value="30s ribosomal protein s13, domain 2"/>
    <property type="match status" value="1"/>
</dbReference>
<dbReference type="HAMAP" id="MF_01315">
    <property type="entry name" value="Ribosomal_uS13"/>
    <property type="match status" value="1"/>
</dbReference>
<dbReference type="InterPro" id="IPR027437">
    <property type="entry name" value="Rbsml_uS13_C"/>
</dbReference>
<dbReference type="InterPro" id="IPR001892">
    <property type="entry name" value="Ribosomal_uS13"/>
</dbReference>
<dbReference type="InterPro" id="IPR010979">
    <property type="entry name" value="Ribosomal_uS13-like_H2TH"/>
</dbReference>
<dbReference type="InterPro" id="IPR019980">
    <property type="entry name" value="Ribosomal_uS13_bac-type"/>
</dbReference>
<dbReference type="InterPro" id="IPR018269">
    <property type="entry name" value="Ribosomal_uS13_CS"/>
</dbReference>
<dbReference type="NCBIfam" id="TIGR03631">
    <property type="entry name" value="uS13_bact"/>
    <property type="match status" value="1"/>
</dbReference>
<dbReference type="PANTHER" id="PTHR10871">
    <property type="entry name" value="30S RIBOSOMAL PROTEIN S13/40S RIBOSOMAL PROTEIN S18"/>
    <property type="match status" value="1"/>
</dbReference>
<dbReference type="PANTHER" id="PTHR10871:SF1">
    <property type="entry name" value="SMALL RIBOSOMAL SUBUNIT PROTEIN US13M"/>
    <property type="match status" value="1"/>
</dbReference>
<dbReference type="Pfam" id="PF00416">
    <property type="entry name" value="Ribosomal_S13"/>
    <property type="match status" value="1"/>
</dbReference>
<dbReference type="PIRSF" id="PIRSF002134">
    <property type="entry name" value="Ribosomal_S13"/>
    <property type="match status" value="1"/>
</dbReference>
<dbReference type="SUPFAM" id="SSF46946">
    <property type="entry name" value="S13-like H2TH domain"/>
    <property type="match status" value="1"/>
</dbReference>
<dbReference type="PROSITE" id="PS00646">
    <property type="entry name" value="RIBOSOMAL_S13_1"/>
    <property type="match status" value="1"/>
</dbReference>
<dbReference type="PROSITE" id="PS50159">
    <property type="entry name" value="RIBOSOMAL_S13_2"/>
    <property type="match status" value="1"/>
</dbReference>